<organism>
    <name type="scientific">Homo sapiens</name>
    <name type="common">Human</name>
    <dbReference type="NCBI Taxonomy" id="9606"/>
    <lineage>
        <taxon>Eukaryota</taxon>
        <taxon>Metazoa</taxon>
        <taxon>Chordata</taxon>
        <taxon>Craniata</taxon>
        <taxon>Vertebrata</taxon>
        <taxon>Euteleostomi</taxon>
        <taxon>Mammalia</taxon>
        <taxon>Eutheria</taxon>
        <taxon>Euarchontoglires</taxon>
        <taxon>Primates</taxon>
        <taxon>Haplorrhini</taxon>
        <taxon>Catarrhini</taxon>
        <taxon>Hominidae</taxon>
        <taxon>Homo</taxon>
    </lineage>
</organism>
<evidence type="ECO:0000255" key="1"/>
<evidence type="ECO:0000255" key="2">
    <source>
        <dbReference type="PROSITE-ProRule" id="PRU00040"/>
    </source>
</evidence>
<evidence type="ECO:0000269" key="3">
    <source>
    </source>
</evidence>
<evidence type="ECO:0000269" key="4">
    <source>
    </source>
</evidence>
<evidence type="ECO:0000269" key="5">
    <source>
    </source>
</evidence>
<evidence type="ECO:0000269" key="6">
    <source>
    </source>
</evidence>
<evidence type="ECO:0007829" key="7">
    <source>
        <dbReference type="PDB" id="4IOP"/>
    </source>
</evidence>
<gene>
    <name type="primary">KLRF2</name>
</gene>
<name>KLRF2_HUMAN</name>
<comment type="function">
    <text evidence="3 6">C-type lectin-like receptor involved in natural killer cell mediated cytotoxicity and cytokine secretion in keratinocytes via its interaction with CLEC2A (PubMed:20194751, PubMed:25510854). Triggers degranulation in a SYK-dependent manner and stimulates SYK phosphotyrosinylation without recruiting SYK directly (PubMed:28082678).</text>
</comment>
<comment type="subunit">
    <text evidence="3 4 5 6">Homodimer; non-disulfide-linked (PubMed:28082678). Interacts with CLEC2A (PubMed:20194751, PubMed:25510854).</text>
</comment>
<comment type="interaction">
    <interactant intactId="EBI-15839574">
        <id>D3W0D1</id>
    </interactant>
    <interactant intactId="EBI-15839595">
        <id>Q6UVW9</id>
        <label>CLEC2A</label>
    </interactant>
    <organismsDiffer>false</organismsDiffer>
    <experiments>5</experiments>
</comment>
<comment type="subcellular location">
    <subcellularLocation>
        <location evidence="3">Cell membrane</location>
        <topology evidence="3">Single-pass type II membrane protein</topology>
    </subcellularLocation>
</comment>
<comment type="PTM">
    <text evidence="3">N-glycosylated.</text>
</comment>
<dbReference type="EMBL" id="GQ398770">
    <property type="protein sequence ID" value="ADC80446.1"/>
    <property type="molecule type" value="mRNA"/>
</dbReference>
<dbReference type="EMBL" id="AC091814">
    <property type="status" value="NOT_ANNOTATED_CDS"/>
    <property type="molecule type" value="Genomic_DNA"/>
</dbReference>
<dbReference type="CCDS" id="CCDS53743.1"/>
<dbReference type="RefSeq" id="NP_001177694.1">
    <property type="nucleotide sequence ID" value="NM_001190765.1"/>
</dbReference>
<dbReference type="PDB" id="4IOP">
    <property type="method" value="X-ray"/>
    <property type="resolution" value="3.20 A"/>
    <property type="chains" value="B=63-207"/>
</dbReference>
<dbReference type="PDBsum" id="4IOP"/>
<dbReference type="SMR" id="D3W0D1"/>
<dbReference type="DIP" id="DIP-58610N"/>
<dbReference type="FunCoup" id="D3W0D1">
    <property type="interactions" value="51"/>
</dbReference>
<dbReference type="IntAct" id="D3W0D1">
    <property type="interactions" value="1"/>
</dbReference>
<dbReference type="STRING" id="9606.ENSP00000438244"/>
<dbReference type="GlyCosmos" id="D3W0D1">
    <property type="glycosylation" value="2 sites, No reported glycans"/>
</dbReference>
<dbReference type="GlyGen" id="D3W0D1">
    <property type="glycosylation" value="3 sites"/>
</dbReference>
<dbReference type="iPTMnet" id="D3W0D1"/>
<dbReference type="PhosphoSitePlus" id="D3W0D1"/>
<dbReference type="BioMuta" id="KLRF2"/>
<dbReference type="PaxDb" id="9606-ENSP00000438244"/>
<dbReference type="PeptideAtlas" id="D3W0D1"/>
<dbReference type="Antibodypedia" id="69740">
    <property type="antibodies" value="52 antibodies from 11 providers"/>
</dbReference>
<dbReference type="DNASU" id="100431172"/>
<dbReference type="Ensembl" id="ENST00000535540.1">
    <property type="protein sequence ID" value="ENSP00000438244.1"/>
    <property type="gene ID" value="ENSG00000256797.1"/>
</dbReference>
<dbReference type="GeneID" id="100431172"/>
<dbReference type="KEGG" id="hsa:100431172"/>
<dbReference type="MANE-Select" id="ENST00000535540.1">
    <property type="protein sequence ID" value="ENSP00000438244.1"/>
    <property type="RefSeq nucleotide sequence ID" value="NM_001190765.1"/>
    <property type="RefSeq protein sequence ID" value="NP_001177694.1"/>
</dbReference>
<dbReference type="UCSC" id="uc021quy.1">
    <property type="organism name" value="human"/>
</dbReference>
<dbReference type="AGR" id="HGNC:37646"/>
<dbReference type="CTD" id="100431172"/>
<dbReference type="DisGeNET" id="100431172"/>
<dbReference type="GeneCards" id="KLRF2"/>
<dbReference type="HGNC" id="HGNC:37646">
    <property type="gene designation" value="KLRF2"/>
</dbReference>
<dbReference type="HPA" id="ENSG00000256797">
    <property type="expression patterns" value="Tissue enriched (skin)"/>
</dbReference>
<dbReference type="MIM" id="618814">
    <property type="type" value="gene"/>
</dbReference>
<dbReference type="neXtProt" id="NX_D3W0D1"/>
<dbReference type="OpenTargets" id="ENSG00000256797"/>
<dbReference type="VEuPathDB" id="HostDB:ENSG00000256797"/>
<dbReference type="eggNOG" id="KOG4297">
    <property type="taxonomic scope" value="Eukaryota"/>
</dbReference>
<dbReference type="GeneTree" id="ENSGT00940000163993"/>
<dbReference type="HOGENOM" id="CLU_049894_8_2_1"/>
<dbReference type="InParanoid" id="D3W0D1"/>
<dbReference type="OMA" id="WMWIDEH"/>
<dbReference type="OrthoDB" id="538816at2759"/>
<dbReference type="PAN-GO" id="D3W0D1">
    <property type="GO annotations" value="1 GO annotation based on evolutionary models"/>
</dbReference>
<dbReference type="PhylomeDB" id="D3W0D1"/>
<dbReference type="TreeFam" id="TF337735"/>
<dbReference type="PathwayCommons" id="D3W0D1"/>
<dbReference type="SignaLink" id="D3W0D1"/>
<dbReference type="BioGRID-ORCS" id="100431172">
    <property type="hits" value="15 hits in 1070 CRISPR screens"/>
</dbReference>
<dbReference type="EvolutionaryTrace" id="D3W0D1"/>
<dbReference type="Pharos" id="D3W0D1">
    <property type="development level" value="Tbio"/>
</dbReference>
<dbReference type="PRO" id="PR:D3W0D1"/>
<dbReference type="Proteomes" id="UP000005640">
    <property type="component" value="Chromosome 12"/>
</dbReference>
<dbReference type="RNAct" id="D3W0D1">
    <property type="molecule type" value="protein"/>
</dbReference>
<dbReference type="Bgee" id="ENSG00000256797">
    <property type="expression patterns" value="Expressed in male germ line stem cell (sensu Vertebrata) in testis and 36 other cell types or tissues"/>
</dbReference>
<dbReference type="GO" id="GO:0005886">
    <property type="term" value="C:plasma membrane"/>
    <property type="evidence" value="ECO:0000314"/>
    <property type="project" value="UniProtKB"/>
</dbReference>
<dbReference type="GO" id="GO:0030246">
    <property type="term" value="F:carbohydrate binding"/>
    <property type="evidence" value="ECO:0007669"/>
    <property type="project" value="UniProtKB-KW"/>
</dbReference>
<dbReference type="GO" id="GO:0042803">
    <property type="term" value="F:protein homodimerization activity"/>
    <property type="evidence" value="ECO:0000314"/>
    <property type="project" value="UniProtKB"/>
</dbReference>
<dbReference type="GO" id="GO:0043320">
    <property type="term" value="P:natural killer cell degranulation"/>
    <property type="evidence" value="ECO:0000304"/>
    <property type="project" value="UniProtKB"/>
</dbReference>
<dbReference type="GO" id="GO:0001819">
    <property type="term" value="P:positive regulation of cytokine production"/>
    <property type="evidence" value="ECO:0000304"/>
    <property type="project" value="UniProtKB"/>
</dbReference>
<dbReference type="CDD" id="cd03593">
    <property type="entry name" value="CLECT_NK_receptors_like"/>
    <property type="match status" value="1"/>
</dbReference>
<dbReference type="FunFam" id="3.10.100.10:FF:000102">
    <property type="entry name" value="Killer cell lectin-like receptor subfamily F member 2"/>
    <property type="match status" value="1"/>
</dbReference>
<dbReference type="Gene3D" id="3.10.100.10">
    <property type="entry name" value="Mannose-Binding Protein A, subunit A"/>
    <property type="match status" value="1"/>
</dbReference>
<dbReference type="InterPro" id="IPR001304">
    <property type="entry name" value="C-type_lectin-like"/>
</dbReference>
<dbReference type="InterPro" id="IPR016186">
    <property type="entry name" value="C-type_lectin-like/link_sf"/>
</dbReference>
<dbReference type="InterPro" id="IPR051379">
    <property type="entry name" value="C-type_Lectin_Receptor_IMM"/>
</dbReference>
<dbReference type="InterPro" id="IPR016187">
    <property type="entry name" value="CTDL_fold"/>
</dbReference>
<dbReference type="InterPro" id="IPR033992">
    <property type="entry name" value="NKR-like_CTLD"/>
</dbReference>
<dbReference type="PANTHER" id="PTHR46746">
    <property type="entry name" value="KILLER CELL LECTIN-LIKE RECEPTOR SUBFAMILY F MEMBER 2"/>
    <property type="match status" value="1"/>
</dbReference>
<dbReference type="PANTHER" id="PTHR46746:SF6">
    <property type="entry name" value="KILLER CELL LECTIN-LIKE RECEPTOR SUBFAMILY F MEMBER 2"/>
    <property type="match status" value="1"/>
</dbReference>
<dbReference type="Pfam" id="PF00059">
    <property type="entry name" value="Lectin_C"/>
    <property type="match status" value="1"/>
</dbReference>
<dbReference type="SMART" id="SM00034">
    <property type="entry name" value="CLECT"/>
    <property type="match status" value="1"/>
</dbReference>
<dbReference type="SUPFAM" id="SSF56436">
    <property type="entry name" value="C-type lectin-like"/>
    <property type="match status" value="1"/>
</dbReference>
<dbReference type="PROSITE" id="PS50041">
    <property type="entry name" value="C_TYPE_LECTIN_2"/>
    <property type="match status" value="1"/>
</dbReference>
<protein>
    <recommendedName>
        <fullName>Killer cell lectin-like receptor subfamily F member 2</fullName>
        <shortName>Lectin-like receptor F2</shortName>
    </recommendedName>
    <alternativeName>
        <fullName>Activating coreceptor NKp65</fullName>
    </alternativeName>
</protein>
<keyword id="KW-0002">3D-structure</keyword>
<keyword id="KW-1003">Cell membrane</keyword>
<keyword id="KW-1015">Disulfide bond</keyword>
<keyword id="KW-0325">Glycoprotein</keyword>
<keyword id="KW-0430">Lectin</keyword>
<keyword id="KW-0472">Membrane</keyword>
<keyword id="KW-0597">Phosphoprotein</keyword>
<keyword id="KW-0675">Receptor</keyword>
<keyword id="KW-1185">Reference proteome</keyword>
<keyword id="KW-0735">Signal-anchor</keyword>
<keyword id="KW-0812">Transmembrane</keyword>
<keyword id="KW-1133">Transmembrane helix</keyword>
<sequence length="207" mass="24008">MENEDGYMTLSFKNRCKSKQKSKDFSLYPQYYCLLLIFGCIVILIFIMTGIDLKFWHKKMDFSQNVNVSSLSGHNYLCPNDWLLNEGKCYWFSTSFKTWKESQRDCTQLQAHLLVIQNLDELEFIQNSLKPGHFGWIGLYVTFQGNLWMWIDEHFLVPELFSVIGPTDDRSCAVITGNWVYSEDCSSTFKGICQRDAILTHNGTSGV</sequence>
<feature type="chain" id="PRO_0000404560" description="Killer cell lectin-like receptor subfamily F member 2">
    <location>
        <begin position="1"/>
        <end position="207"/>
    </location>
</feature>
<feature type="topological domain" description="Cytoplasmic" evidence="1">
    <location>
        <begin position="1"/>
        <end position="30"/>
    </location>
</feature>
<feature type="transmembrane region" description="Helical; Signal-anchor for type II membrane protein" evidence="1">
    <location>
        <begin position="31"/>
        <end position="51"/>
    </location>
</feature>
<feature type="topological domain" description="Extracellular" evidence="1">
    <location>
        <begin position="52"/>
        <end position="207"/>
    </location>
</feature>
<feature type="domain" description="C-type lectin" evidence="2">
    <location>
        <begin position="85"/>
        <end position="194"/>
    </location>
</feature>
<feature type="modified residue" description="Phosphotyrosine" evidence="6">
    <location>
        <position position="7"/>
    </location>
</feature>
<feature type="glycosylation site" description="N-linked (GlcNAc...) asparagine" evidence="1">
    <location>
        <position position="67"/>
    </location>
</feature>
<feature type="glycosylation site" description="N-linked (GlcNAc...) asparagine" evidence="1">
    <location>
        <position position="202"/>
    </location>
</feature>
<feature type="disulfide bond" evidence="2 4">
    <location>
        <begin position="78"/>
        <end position="89"/>
    </location>
</feature>
<feature type="disulfide bond" evidence="2 4">
    <location>
        <begin position="106"/>
        <end position="193"/>
    </location>
</feature>
<feature type="disulfide bond" evidence="2 4">
    <location>
        <begin position="172"/>
        <end position="185"/>
    </location>
</feature>
<feature type="mutagenesis site" description="Loss of function." evidence="3 6">
    <original>Y</original>
    <variation>F</variation>
    <location>
        <position position="7"/>
    </location>
</feature>
<feature type="strand" evidence="7">
    <location>
        <begin position="79"/>
        <end position="81"/>
    </location>
</feature>
<feature type="strand" evidence="7">
    <location>
        <begin position="83"/>
        <end position="85"/>
    </location>
</feature>
<feature type="strand" evidence="7">
    <location>
        <begin position="88"/>
        <end position="91"/>
    </location>
</feature>
<feature type="strand" evidence="7">
    <location>
        <begin position="94"/>
        <end position="98"/>
    </location>
</feature>
<feature type="helix" evidence="7">
    <location>
        <begin position="99"/>
        <end position="107"/>
    </location>
</feature>
<feature type="turn" evidence="7">
    <location>
        <begin position="108"/>
        <end position="110"/>
    </location>
</feature>
<feature type="helix" evidence="7">
    <location>
        <begin position="119"/>
        <end position="125"/>
    </location>
</feature>
<feature type="helix" evidence="7">
    <location>
        <begin position="126"/>
        <end position="128"/>
    </location>
</feature>
<feature type="strand" evidence="7">
    <location>
        <begin position="134"/>
        <end position="141"/>
    </location>
</feature>
<feature type="strand" evidence="7">
    <location>
        <begin position="143"/>
        <end position="145"/>
    </location>
</feature>
<feature type="strand" evidence="7">
    <location>
        <begin position="148"/>
        <end position="150"/>
    </location>
</feature>
<feature type="turn" evidence="7">
    <location>
        <begin position="151"/>
        <end position="153"/>
    </location>
</feature>
<feature type="turn" evidence="7">
    <location>
        <begin position="158"/>
        <end position="160"/>
    </location>
</feature>
<feature type="strand" evidence="7">
    <location>
        <begin position="171"/>
        <end position="178"/>
    </location>
</feature>
<feature type="strand" evidence="7">
    <location>
        <begin position="180"/>
        <end position="184"/>
    </location>
</feature>
<feature type="strand" evidence="7">
    <location>
        <begin position="187"/>
        <end position="190"/>
    </location>
</feature>
<feature type="strand" evidence="7">
    <location>
        <begin position="193"/>
        <end position="195"/>
    </location>
</feature>
<reference key="1">
    <citation type="journal article" date="2010" name="Proc. Natl. Acad. Sci. U.S.A.">
        <title>Interaction of C-type lectin-like receptors NKp65 and KACL facilitates dedicated immune recognition of human keratinocytes.</title>
        <authorList>
            <person name="Spreu J."/>
            <person name="Kuttruff S."/>
            <person name="Stejfova V."/>
            <person name="Dennehy K.M."/>
            <person name="Schittek B."/>
            <person name="Steinle A."/>
        </authorList>
    </citation>
    <scope>NUCLEOTIDE SEQUENCE [MRNA]</scope>
    <scope>FUNCTION</scope>
    <scope>SUBCELLULAR LOCATION</scope>
    <scope>SUBUNIT</scope>
    <scope>GLYCOSYLATION</scope>
    <scope>INTERACTION WITH CLEC2A</scope>
    <scope>MUTAGENESIS OF TYR-7</scope>
</reference>
<reference key="2">
    <citation type="journal article" date="2006" name="Nature">
        <title>The finished DNA sequence of human chromosome 12.</title>
        <authorList>
            <person name="Scherer S.E."/>
            <person name="Muzny D.M."/>
            <person name="Buhay C.J."/>
            <person name="Chen R."/>
            <person name="Cree A."/>
            <person name="Ding Y."/>
            <person name="Dugan-Rocha S."/>
            <person name="Gill R."/>
            <person name="Gunaratne P."/>
            <person name="Harris R.A."/>
            <person name="Hawes A.C."/>
            <person name="Hernandez J."/>
            <person name="Hodgson A.V."/>
            <person name="Hume J."/>
            <person name="Jackson A."/>
            <person name="Khan Z.M."/>
            <person name="Kovar-Smith C."/>
            <person name="Lewis L.R."/>
            <person name="Lozado R.J."/>
            <person name="Metzker M.L."/>
            <person name="Milosavljevic A."/>
            <person name="Miner G.R."/>
            <person name="Montgomery K.T."/>
            <person name="Morgan M.B."/>
            <person name="Nazareth L.V."/>
            <person name="Scott G."/>
            <person name="Sodergren E."/>
            <person name="Song X.-Z."/>
            <person name="Steffen D."/>
            <person name="Lovering R.C."/>
            <person name="Wheeler D.A."/>
            <person name="Worley K.C."/>
            <person name="Yuan Y."/>
            <person name="Zhang Z."/>
            <person name="Adams C.Q."/>
            <person name="Ansari-Lari M.A."/>
            <person name="Ayele M."/>
            <person name="Brown M.J."/>
            <person name="Chen G."/>
            <person name="Chen Z."/>
            <person name="Clerc-Blankenburg K.P."/>
            <person name="Davis C."/>
            <person name="Delgado O."/>
            <person name="Dinh H.H."/>
            <person name="Draper H."/>
            <person name="Gonzalez-Garay M.L."/>
            <person name="Havlak P."/>
            <person name="Jackson L.R."/>
            <person name="Jacob L.S."/>
            <person name="Kelly S.H."/>
            <person name="Li L."/>
            <person name="Li Z."/>
            <person name="Liu J."/>
            <person name="Liu W."/>
            <person name="Lu J."/>
            <person name="Maheshwari M."/>
            <person name="Nguyen B.-V."/>
            <person name="Okwuonu G.O."/>
            <person name="Pasternak S."/>
            <person name="Perez L.M."/>
            <person name="Plopper F.J.H."/>
            <person name="Santibanez J."/>
            <person name="Shen H."/>
            <person name="Tabor P.E."/>
            <person name="Verduzco D."/>
            <person name="Waldron L."/>
            <person name="Wang Q."/>
            <person name="Williams G.A."/>
            <person name="Zhang J."/>
            <person name="Zhou J."/>
            <person name="Allen C.C."/>
            <person name="Amin A.G."/>
            <person name="Anyalebechi V."/>
            <person name="Bailey M."/>
            <person name="Barbaria J.A."/>
            <person name="Bimage K.E."/>
            <person name="Bryant N.P."/>
            <person name="Burch P.E."/>
            <person name="Burkett C.E."/>
            <person name="Burrell K.L."/>
            <person name="Calderon E."/>
            <person name="Cardenas V."/>
            <person name="Carter K."/>
            <person name="Casias K."/>
            <person name="Cavazos I."/>
            <person name="Cavazos S.R."/>
            <person name="Ceasar H."/>
            <person name="Chacko J."/>
            <person name="Chan S.N."/>
            <person name="Chavez D."/>
            <person name="Christopoulos C."/>
            <person name="Chu J."/>
            <person name="Cockrell R."/>
            <person name="Cox C.D."/>
            <person name="Dang M."/>
            <person name="Dathorne S.R."/>
            <person name="David R."/>
            <person name="Davis C.M."/>
            <person name="Davy-Carroll L."/>
            <person name="Deshazo D.R."/>
            <person name="Donlin J.E."/>
            <person name="D'Souza L."/>
            <person name="Eaves K.A."/>
            <person name="Egan A."/>
            <person name="Emery-Cohen A.J."/>
            <person name="Escotto M."/>
            <person name="Flagg N."/>
            <person name="Forbes L.D."/>
            <person name="Gabisi A.M."/>
            <person name="Garza M."/>
            <person name="Hamilton C."/>
            <person name="Henderson N."/>
            <person name="Hernandez O."/>
            <person name="Hines S."/>
            <person name="Hogues M.E."/>
            <person name="Huang M."/>
            <person name="Idlebird D.G."/>
            <person name="Johnson R."/>
            <person name="Jolivet A."/>
            <person name="Jones S."/>
            <person name="Kagan R."/>
            <person name="King L.M."/>
            <person name="Leal B."/>
            <person name="Lebow H."/>
            <person name="Lee S."/>
            <person name="LeVan J.M."/>
            <person name="Lewis L.C."/>
            <person name="London P."/>
            <person name="Lorensuhewa L.M."/>
            <person name="Loulseged H."/>
            <person name="Lovett D.A."/>
            <person name="Lucier A."/>
            <person name="Lucier R.L."/>
            <person name="Ma J."/>
            <person name="Madu R.C."/>
            <person name="Mapua P."/>
            <person name="Martindale A.D."/>
            <person name="Martinez E."/>
            <person name="Massey E."/>
            <person name="Mawhiney S."/>
            <person name="Meador M.G."/>
            <person name="Mendez S."/>
            <person name="Mercado C."/>
            <person name="Mercado I.C."/>
            <person name="Merritt C.E."/>
            <person name="Miner Z.L."/>
            <person name="Minja E."/>
            <person name="Mitchell T."/>
            <person name="Mohabbat F."/>
            <person name="Mohabbat K."/>
            <person name="Montgomery B."/>
            <person name="Moore N."/>
            <person name="Morris S."/>
            <person name="Munidasa M."/>
            <person name="Ngo R.N."/>
            <person name="Nguyen N.B."/>
            <person name="Nickerson E."/>
            <person name="Nwaokelemeh O.O."/>
            <person name="Nwokenkwo S."/>
            <person name="Obregon M."/>
            <person name="Oguh M."/>
            <person name="Oragunye N."/>
            <person name="Oviedo R.J."/>
            <person name="Parish B.J."/>
            <person name="Parker D.N."/>
            <person name="Parrish J."/>
            <person name="Parks K.L."/>
            <person name="Paul H.A."/>
            <person name="Payton B.A."/>
            <person name="Perez A."/>
            <person name="Perrin W."/>
            <person name="Pickens A."/>
            <person name="Primus E.L."/>
            <person name="Pu L.-L."/>
            <person name="Puazo M."/>
            <person name="Quiles M.M."/>
            <person name="Quiroz J.B."/>
            <person name="Rabata D."/>
            <person name="Reeves K."/>
            <person name="Ruiz S.J."/>
            <person name="Shao H."/>
            <person name="Sisson I."/>
            <person name="Sonaike T."/>
            <person name="Sorelle R.P."/>
            <person name="Sutton A.E."/>
            <person name="Svatek A.F."/>
            <person name="Svetz L.A."/>
            <person name="Tamerisa K.S."/>
            <person name="Taylor T.R."/>
            <person name="Teague B."/>
            <person name="Thomas N."/>
            <person name="Thorn R.D."/>
            <person name="Trejos Z.Y."/>
            <person name="Trevino B.K."/>
            <person name="Ukegbu O.N."/>
            <person name="Urban J.B."/>
            <person name="Vasquez L.I."/>
            <person name="Vera V.A."/>
            <person name="Villasana D.M."/>
            <person name="Wang L."/>
            <person name="Ward-Moore S."/>
            <person name="Warren J.T."/>
            <person name="Wei X."/>
            <person name="White F."/>
            <person name="Williamson A.L."/>
            <person name="Wleczyk R."/>
            <person name="Wooden H.S."/>
            <person name="Wooden S.H."/>
            <person name="Yen J."/>
            <person name="Yoon L."/>
            <person name="Yoon V."/>
            <person name="Zorrilla S.E."/>
            <person name="Nelson D."/>
            <person name="Kucherlapati R."/>
            <person name="Weinstock G."/>
            <person name="Gibbs R.A."/>
        </authorList>
    </citation>
    <scope>NUCLEOTIDE SEQUENCE [LARGE SCALE GENOMIC DNA]</scope>
</reference>
<reference key="3">
    <citation type="journal article" date="2015" name="Immunology">
        <title>Key residues at the membrane-distal surface of KACL, but not glycosylation, determine the functional interaction of the keratinocyte-specific C-type lectin-like receptor KACL with its high-affinity receptor NKp65.</title>
        <authorList>
            <person name="Bauer B."/>
            <person name="Spreu J."/>
            <person name="Rohe C."/>
            <person name="Vogler I."/>
            <person name="Steinle A."/>
        </authorList>
    </citation>
    <scope>FUNCTION</scope>
    <scope>INTERACTION WITH CLEC2A</scope>
</reference>
<reference key="4">
    <citation type="journal article" date="2017" name="J. Biol. Chem.">
        <title>The Activating C-type Lectin-like Receptor NKp65 Signals through a Hemi-immunoreceptor Tyrosine-based Activation Motif (hemITAM) and Spleen Tyrosine Kinase (Syk).</title>
        <authorList>
            <person name="Bauer B."/>
            <person name="Wotapek T."/>
            <person name="Zoeller T."/>
            <person name="Rutkowski E."/>
            <person name="Steinle A."/>
        </authorList>
    </citation>
    <scope>FUNCTION</scope>
    <scope>MUTAGENESIS OF TYR-7</scope>
    <scope>SUBUNIT</scope>
    <scope>PHOSPHORYLATION AT TYR-7</scope>
</reference>
<reference key="5">
    <citation type="journal article" date="2013" name="Proc. Natl. Acad. Sci. U.S.A.">
        <title>Structure of NKp65 bound to its keratinocyte ligand reveals basis for genetically linked recognition in natural killer gene complex.</title>
        <authorList>
            <person name="Li Y."/>
            <person name="Wang Q."/>
            <person name="Chen S."/>
            <person name="Brown P.H."/>
            <person name="Mariuzza R.A."/>
        </authorList>
    </citation>
    <scope>X-RAY CRYSTALLOGRAPHY (3.2 ANGSTROMS) OF 63-207 IN COMPLEX WITH CLEC2A</scope>
    <scope>INTERACTION WITH CLEC2A</scope>
    <scope>DISULFIDE BONDS</scope>
</reference>
<accession>D3W0D1</accession>
<proteinExistence type="evidence at protein level"/>